<protein>
    <recommendedName>
        <fullName>Uncharacterized protein in DsaVM 5'region</fullName>
    </recommendedName>
</protein>
<sequence length="119" mass="13966">LESQNIRDYTEQTHDKEDKSTEFDFHFTLNGKTYGLSAKRTVRERYKQFIKTSQMSQLDIMIDVTLGIDITEDKLKNIRQHGVYVFVADEVYNESPFMKKNEGIFPATQFTKETLSNLE</sequence>
<organism>
    <name type="scientific">Dactylococcopsis salina</name>
    <name type="common">Myxobaktron salinum</name>
    <dbReference type="NCBI Taxonomy" id="292566"/>
    <lineage>
        <taxon>Bacteria</taxon>
        <taxon>Bacillati</taxon>
        <taxon>Cyanobacteriota</taxon>
        <taxon>Cyanophyceae</taxon>
        <taxon>Synechococcales</taxon>
        <taxon>Synechococcaceae</taxon>
        <taxon>Dactylococcopsis</taxon>
    </lineage>
</organism>
<accession>P50184</accession>
<reference key="1">
    <citation type="journal article" date="1994" name="Nucleic Acids Res.">
        <title>DsaV methyltransferase and its isoschizomers contain a conserved segment that is similar to the segment in Hhai methyltransferase that is in contact with DNA bases.</title>
        <authorList>
            <person name="Gopal J."/>
            <person name="Yebra M.J."/>
            <person name="Bhagwat A.S."/>
        </authorList>
    </citation>
    <scope>NUCLEOTIDE SEQUENCE [GENOMIC DNA]</scope>
    <source>
        <strain>DSM 4880</strain>
    </source>
</reference>
<proteinExistence type="predicted"/>
<feature type="chain" id="PRO_0000066199" description="Uncharacterized protein in DsaVM 5'region">
    <location>
        <begin position="1" status="less than"/>
        <end position="119"/>
    </location>
</feature>
<feature type="non-terminal residue">
    <location>
        <position position="1"/>
    </location>
</feature>
<name>YDSM_DACSA</name>
<dbReference type="EMBL" id="U10528">
    <property type="protein sequence ID" value="AAA86045.1"/>
    <property type="molecule type" value="Genomic_DNA"/>
</dbReference>
<dbReference type="PIR" id="S53764">
    <property type="entry name" value="S53764"/>
</dbReference>
<dbReference type="SMR" id="P50184"/>
<dbReference type="REBASE" id="794">
    <property type="entry name" value="DsaV"/>
</dbReference>
<dbReference type="Gene3D" id="3.40.91.80">
    <property type="match status" value="1"/>
</dbReference>
<dbReference type="InterPro" id="IPR038365">
    <property type="entry name" value="EcoRII_C_sf"/>
</dbReference>